<sequence>MKGAKSKGAAKADAKLAVKSKGAEKPAKGRKGKAGKDPNKPKRAPSAFFVFMEEFRKEFKEKNPKNKSVAAVGKAAGDRWKSLSESDKAPYVAKANKLKLEYNKAIAAYNKGESTAAKKAPAKEEEEEDEEESDKSKSEVNDEDDEEGSEEDEDDDE</sequence>
<proteinExistence type="evidence at protein level"/>
<keyword id="KW-0903">Direct protein sequencing</keyword>
<keyword id="KW-0238">DNA-binding</keyword>
<keyword id="KW-0539">Nucleus</keyword>
<keyword id="KW-0597">Phosphoprotein</keyword>
<keyword id="KW-1185">Reference proteome</keyword>
<evidence type="ECO:0000255" key="1"/>
<evidence type="ECO:0000255" key="2">
    <source>
        <dbReference type="PROSITE-ProRule" id="PRU00267"/>
    </source>
</evidence>
<evidence type="ECO:0000256" key="3">
    <source>
        <dbReference type="SAM" id="MobiDB-lite"/>
    </source>
</evidence>
<evidence type="ECO:0000305" key="4"/>
<reference key="1">
    <citation type="journal article" date="1991" name="Nucleic Acids Res.">
        <title>Isolation and characterization of maize cDNAs encoding a high mobility group protein displaying a HMG-box.</title>
        <authorList>
            <person name="Grasser K.D."/>
            <person name="Feix G."/>
        </authorList>
    </citation>
    <scope>NUCLEOTIDE SEQUENCE [MRNA]</scope>
    <scope>PROTEIN SEQUENCE OF 1-29</scope>
    <source>
        <tissue>Leaf</tissue>
    </source>
</reference>
<reference key="2">
    <citation type="journal article" date="1993" name="J. Biol. Chem.">
        <title>Molecular cloning of two DNA-binding proteins of maize that are structurally different but interact with the same sequence motif.</title>
        <authorList>
            <person name="Yanagisawa S."/>
            <person name="Izui K."/>
        </authorList>
    </citation>
    <scope>NUCLEOTIDE SEQUENCE [MRNA]</scope>
    <source>
        <strain>cv. H84</strain>
        <tissue>Green leaf</tissue>
    </source>
</reference>
<feature type="chain" id="PRO_0000048558" description="DNA-binding protein MNB1B">
    <location>
        <begin position="1"/>
        <end position="157"/>
    </location>
</feature>
<feature type="DNA-binding region" description="HMG box" evidence="2">
    <location>
        <begin position="41"/>
        <end position="110"/>
    </location>
</feature>
<feature type="region of interest" description="Disordered" evidence="3">
    <location>
        <begin position="1"/>
        <end position="45"/>
    </location>
</feature>
<feature type="region of interest" description="Disordered" evidence="3">
    <location>
        <begin position="59"/>
        <end position="87"/>
    </location>
</feature>
<feature type="region of interest" description="Disordered" evidence="3">
    <location>
        <begin position="109"/>
        <end position="157"/>
    </location>
</feature>
<feature type="compositionally biased region" description="Basic and acidic residues" evidence="3">
    <location>
        <begin position="10"/>
        <end position="27"/>
    </location>
</feature>
<feature type="compositionally biased region" description="Basic and acidic residues" evidence="3">
    <location>
        <begin position="76"/>
        <end position="87"/>
    </location>
</feature>
<feature type="compositionally biased region" description="Acidic residues" evidence="3">
    <location>
        <begin position="124"/>
        <end position="133"/>
    </location>
</feature>
<feature type="compositionally biased region" description="Acidic residues" evidence="3">
    <location>
        <begin position="141"/>
        <end position="157"/>
    </location>
</feature>
<feature type="modified residue" description="Phosphoserine; by CK2" evidence="1">
    <location>
        <position position="149"/>
    </location>
</feature>
<accession>P27347</accession>
<comment type="function">
    <text>Recognizes an AAGG motif at the MNF1-binding site.</text>
</comment>
<comment type="subcellular location">
    <subcellularLocation>
        <location evidence="4">Nucleus</location>
    </subcellularLocation>
</comment>
<comment type="tissue specificity">
    <text>Expressed in all tissues examined.</text>
</comment>
<comment type="sequence caution" evidence="4">
    <conflict type="erroneous initiation">
        <sequence resource="EMBL-CDS" id="CAA46876"/>
    </conflict>
</comment>
<dbReference type="EMBL" id="X58282">
    <property type="protein sequence ID" value="CAA41220.1"/>
    <property type="molecule type" value="mRNA"/>
</dbReference>
<dbReference type="EMBL" id="X66077">
    <property type="protein sequence ID" value="CAA46876.1"/>
    <property type="status" value="ALT_INIT"/>
    <property type="molecule type" value="mRNA"/>
</dbReference>
<dbReference type="PIR" id="B47150">
    <property type="entry name" value="B47150"/>
</dbReference>
<dbReference type="PIR" id="T03640">
    <property type="entry name" value="T03640"/>
</dbReference>
<dbReference type="RefSeq" id="NP_001167650.1">
    <property type="nucleotide sequence ID" value="NM_001174179.1"/>
</dbReference>
<dbReference type="SMR" id="P27347"/>
<dbReference type="FunCoup" id="P27347">
    <property type="interactions" value="1445"/>
</dbReference>
<dbReference type="STRING" id="4577.P27347"/>
<dbReference type="PaxDb" id="4577-GRMZM5G834758_P03"/>
<dbReference type="GeneID" id="100381276"/>
<dbReference type="KEGG" id="zma:100381276"/>
<dbReference type="MaizeGDB" id="65274"/>
<dbReference type="eggNOG" id="KOG0381">
    <property type="taxonomic scope" value="Eukaryota"/>
</dbReference>
<dbReference type="HOGENOM" id="CLU_082854_1_1_1"/>
<dbReference type="InParanoid" id="P27347"/>
<dbReference type="OMA" id="PLSAYMH"/>
<dbReference type="OrthoDB" id="1919336at2759"/>
<dbReference type="Proteomes" id="UP000007305">
    <property type="component" value="Unplaced"/>
</dbReference>
<dbReference type="ExpressionAtlas" id="P27347">
    <property type="expression patterns" value="baseline"/>
</dbReference>
<dbReference type="GO" id="GO:0005634">
    <property type="term" value="C:nucleus"/>
    <property type="evidence" value="ECO:0000314"/>
    <property type="project" value="AgBase"/>
</dbReference>
<dbReference type="GO" id="GO:0000976">
    <property type="term" value="F:transcription cis-regulatory region binding"/>
    <property type="evidence" value="ECO:0000314"/>
    <property type="project" value="AgBase"/>
</dbReference>
<dbReference type="GO" id="GO:0006355">
    <property type="term" value="P:regulation of DNA-templated transcription"/>
    <property type="evidence" value="ECO:0000304"/>
    <property type="project" value="AgBase"/>
</dbReference>
<dbReference type="CDD" id="cd22005">
    <property type="entry name" value="HMG-box_AtHMGB1-like"/>
    <property type="match status" value="1"/>
</dbReference>
<dbReference type="FunFam" id="1.10.30.10:FF:000044">
    <property type="entry name" value="High mobility group B1"/>
    <property type="match status" value="1"/>
</dbReference>
<dbReference type="Gene3D" id="1.10.30.10">
    <property type="entry name" value="High mobility group box domain"/>
    <property type="match status" value="1"/>
</dbReference>
<dbReference type="InterPro" id="IPR009071">
    <property type="entry name" value="HMG_box_dom"/>
</dbReference>
<dbReference type="InterPro" id="IPR036910">
    <property type="entry name" value="HMG_box_dom_sf"/>
</dbReference>
<dbReference type="InterPro" id="IPR031061">
    <property type="entry name" value="HMGB_plant"/>
</dbReference>
<dbReference type="PANTHER" id="PTHR46261:SF18">
    <property type="entry name" value="DNA-BINDING PROTEIN MNB1B"/>
    <property type="match status" value="1"/>
</dbReference>
<dbReference type="PANTHER" id="PTHR46261">
    <property type="entry name" value="HIGH MOBILITY GROUP B PROTEIN 4-RELATED"/>
    <property type="match status" value="1"/>
</dbReference>
<dbReference type="Pfam" id="PF00505">
    <property type="entry name" value="HMG_box"/>
    <property type="match status" value="1"/>
</dbReference>
<dbReference type="PRINTS" id="PR00886">
    <property type="entry name" value="HIGHMOBLTY12"/>
</dbReference>
<dbReference type="SMART" id="SM00398">
    <property type="entry name" value="HMG"/>
    <property type="match status" value="1"/>
</dbReference>
<dbReference type="SUPFAM" id="SSF47095">
    <property type="entry name" value="HMG-box"/>
    <property type="match status" value="1"/>
</dbReference>
<dbReference type="PROSITE" id="PS50118">
    <property type="entry name" value="HMG_BOX_2"/>
    <property type="match status" value="1"/>
</dbReference>
<gene>
    <name type="primary">MNB1B</name>
</gene>
<name>MNB1B_MAIZE</name>
<protein>
    <recommendedName>
        <fullName>DNA-binding protein MNB1B</fullName>
    </recommendedName>
    <alternativeName>
        <fullName>HMG1-like protein</fullName>
    </alternativeName>
</protein>
<organism>
    <name type="scientific">Zea mays</name>
    <name type="common">Maize</name>
    <dbReference type="NCBI Taxonomy" id="4577"/>
    <lineage>
        <taxon>Eukaryota</taxon>
        <taxon>Viridiplantae</taxon>
        <taxon>Streptophyta</taxon>
        <taxon>Embryophyta</taxon>
        <taxon>Tracheophyta</taxon>
        <taxon>Spermatophyta</taxon>
        <taxon>Magnoliopsida</taxon>
        <taxon>Liliopsida</taxon>
        <taxon>Poales</taxon>
        <taxon>Poaceae</taxon>
        <taxon>PACMAD clade</taxon>
        <taxon>Panicoideae</taxon>
        <taxon>Andropogonodae</taxon>
        <taxon>Andropogoneae</taxon>
        <taxon>Tripsacinae</taxon>
        <taxon>Zea</taxon>
    </lineage>
</organism>